<reference key="1">
    <citation type="journal article" date="1995" name="J. Gen. Virol.">
        <title>Human enteric Caliciviridae: the complete genome sequence and expression of virus-like particles from a genetic group II small round structured virus.</title>
        <authorList>
            <person name="Dingle K.E."/>
            <person name="Lambden P.R."/>
            <person name="Caul E.O."/>
            <person name="Clarke I.N."/>
        </authorList>
    </citation>
    <scope>NUCLEOTIDE SEQUENCE [GENOMIC RNA]</scope>
</reference>
<organism>
    <name type="scientific">Lordsdale virus (strain GII/Human/United Kingdom/Lordsdale/1993)</name>
    <name type="common">Human enteric calicivirus</name>
    <name type="synonym">Hu/NV/LD/1993/UK</name>
    <dbReference type="NCBI Taxonomy" id="82658"/>
    <lineage>
        <taxon>Viruses</taxon>
        <taxon>Riboviria</taxon>
        <taxon>Orthornavirae</taxon>
        <taxon>Pisuviricota</taxon>
        <taxon>Pisoniviricetes</taxon>
        <taxon>Picornavirales</taxon>
        <taxon>Caliciviridae</taxon>
        <taxon>Norovirus</taxon>
        <taxon>Norwalk virus</taxon>
    </lineage>
</organism>
<organismHost>
    <name type="scientific">Homo sapiens</name>
    <name type="common">Human</name>
    <dbReference type="NCBI Taxonomy" id="9606"/>
</organismHost>
<sequence>MAGAFFAGLASDVLGSGLGSLINAGAGAINQKVEFENNRKLQQASFQFSSTLQQASFQHDKEMLQAQIEATQKLQQDLMKVKQAVLLEGGFSTADAARGAINAPMTKALDWSGTRYWAPDARVTTYNAGHFSTPQSLGALTGRTNSRVSAPARSSPSALSNAPTATSLHSNQTVSTRLGSSAGSGTGVSSLSSAARTRSWVEDQNRNLSPFMRGALNTSFVTPPSSRSSSQSTVSTVPKEILDSWTGAFNTRRQPLFAHIRKRGESRV</sequence>
<gene>
    <name type="ORF">ORF3</name>
</gene>
<dbReference type="EMBL" id="X86557">
    <property type="protein sequence ID" value="CAA60256.1"/>
    <property type="molecule type" value="Genomic_RNA"/>
</dbReference>
<dbReference type="Proteomes" id="UP000007767">
    <property type="component" value="Genome"/>
</dbReference>
<dbReference type="GO" id="GO:0030430">
    <property type="term" value="C:host cell cytoplasm"/>
    <property type="evidence" value="ECO:0007669"/>
    <property type="project" value="UniProtKB-SubCell"/>
</dbReference>
<dbReference type="GO" id="GO:0098021">
    <property type="term" value="C:viral capsid, decoration"/>
    <property type="evidence" value="ECO:0007669"/>
    <property type="project" value="UniProtKB-KW"/>
</dbReference>
<dbReference type="InterPro" id="IPR004278">
    <property type="entry name" value="VP2"/>
</dbReference>
<dbReference type="Pfam" id="PF03035">
    <property type="entry name" value="RNA_capsid"/>
    <property type="match status" value="2"/>
</dbReference>
<proteinExistence type="inferred from homology"/>
<keyword id="KW-1232">Capsid decoration protein</keyword>
<keyword id="KW-0167">Capsid protein</keyword>
<keyword id="KW-1035">Host cytoplasm</keyword>
<keyword id="KW-0946">Virion</keyword>
<protein>
    <recommendedName>
        <fullName>Minor capsid protein VP2</fullName>
    </recommendedName>
</protein>
<comment type="function">
    <text evidence="1">Minor structural protein that forms a portal-like structure at a unique three-fold axis of symmetry, following binding to the host receptor. The channel formed by VP2 may allow the delivery of the viral genome through the host endosomal membrane.</text>
</comment>
<comment type="subunit">
    <text evidence="1">Homooligomer. The portal-like structure consists in 12 copies of VP2. Interacts with capsid protein VP1.</text>
</comment>
<comment type="subcellular location">
    <subcellularLocation>
        <location evidence="1">Virion</location>
    </subcellularLocation>
    <subcellularLocation>
        <location evidence="3">Host cytoplasm</location>
    </subcellularLocation>
</comment>
<comment type="domain">
    <text evidence="1">The N-terminus domain points away from the virion surface.</text>
</comment>
<comment type="miscellaneous">
    <text evidence="1">Translated by a ribosomal termination-reinitiation process from the bicistronic mRNA coding for VP1 and VP2.</text>
</comment>
<comment type="similarity">
    <text evidence="3">Belongs to the norovirus VP2 family.</text>
</comment>
<accession>P54636</accession>
<name>VP2_LORDV</name>
<feature type="chain" id="PRO_0000100130" description="Minor capsid protein VP2">
    <location>
        <begin position="1"/>
        <end position="268"/>
    </location>
</feature>
<feature type="region of interest" description="Disordered" evidence="2">
    <location>
        <begin position="132"/>
        <end position="199"/>
    </location>
</feature>
<feature type="compositionally biased region" description="Polar residues" evidence="2">
    <location>
        <begin position="132"/>
        <end position="144"/>
    </location>
</feature>
<feature type="compositionally biased region" description="Low complexity" evidence="2">
    <location>
        <begin position="145"/>
        <end position="163"/>
    </location>
</feature>
<feature type="compositionally biased region" description="Polar residues" evidence="2">
    <location>
        <begin position="164"/>
        <end position="178"/>
    </location>
</feature>
<feature type="compositionally biased region" description="Low complexity" evidence="2">
    <location>
        <begin position="179"/>
        <end position="195"/>
    </location>
</feature>
<evidence type="ECO:0000250" key="1">
    <source>
        <dbReference type="UniProtKB" id="P28711"/>
    </source>
</evidence>
<evidence type="ECO:0000256" key="2">
    <source>
        <dbReference type="SAM" id="MobiDB-lite"/>
    </source>
</evidence>
<evidence type="ECO:0000305" key="3"/>